<organism>
    <name type="scientific">Bacillus subtilis (strain 168)</name>
    <dbReference type="NCBI Taxonomy" id="224308"/>
    <lineage>
        <taxon>Bacteria</taxon>
        <taxon>Bacillati</taxon>
        <taxon>Bacillota</taxon>
        <taxon>Bacilli</taxon>
        <taxon>Bacillales</taxon>
        <taxon>Bacillaceae</taxon>
        <taxon>Bacillus</taxon>
    </lineage>
</organism>
<protein>
    <recommendedName>
        <fullName>Uncharacterized acetyltransferase YvcN</fullName>
        <ecNumber>2.3.1.-</ecNumber>
    </recommendedName>
</protein>
<evidence type="ECO:0000250" key="1"/>
<evidence type="ECO:0000305" key="2"/>
<accession>O06977</accession>
<feature type="chain" id="PRO_0000107921" description="Uncharacterized acetyltransferase YvcN">
    <location>
        <begin position="1"/>
        <end position="254"/>
    </location>
</feature>
<feature type="active site" description="Acyl-thioester intermediate" evidence="1">
    <location>
        <position position="71"/>
    </location>
</feature>
<feature type="active site" evidence="1">
    <location>
        <position position="110"/>
    </location>
</feature>
<feature type="active site" evidence="1">
    <location>
        <position position="125"/>
    </location>
</feature>
<dbReference type="EC" id="2.3.1.-"/>
<dbReference type="EMBL" id="Z94043">
    <property type="protein sequence ID" value="CAB08061.1"/>
    <property type="molecule type" value="Genomic_DNA"/>
</dbReference>
<dbReference type="EMBL" id="AL009126">
    <property type="protein sequence ID" value="CAB15478.1"/>
    <property type="molecule type" value="Genomic_DNA"/>
</dbReference>
<dbReference type="PIR" id="C70032">
    <property type="entry name" value="C70032"/>
</dbReference>
<dbReference type="RefSeq" id="NP_391353.1">
    <property type="nucleotide sequence ID" value="NC_000964.3"/>
</dbReference>
<dbReference type="RefSeq" id="WP_009968228.1">
    <property type="nucleotide sequence ID" value="NZ_OZ025638.1"/>
</dbReference>
<dbReference type="SMR" id="O06977"/>
<dbReference type="FunCoup" id="O06977">
    <property type="interactions" value="64"/>
</dbReference>
<dbReference type="STRING" id="224308.BSU34730"/>
<dbReference type="PaxDb" id="224308-BSU34730"/>
<dbReference type="EnsemblBacteria" id="CAB15478">
    <property type="protein sequence ID" value="CAB15478"/>
    <property type="gene ID" value="BSU_34730"/>
</dbReference>
<dbReference type="GeneID" id="936525"/>
<dbReference type="KEGG" id="bsu:BSU34730"/>
<dbReference type="PATRIC" id="fig|224308.43.peg.3638"/>
<dbReference type="eggNOG" id="COG2162">
    <property type="taxonomic scope" value="Bacteria"/>
</dbReference>
<dbReference type="InParanoid" id="O06977"/>
<dbReference type="OrthoDB" id="7181050at2"/>
<dbReference type="PhylomeDB" id="O06977"/>
<dbReference type="BioCyc" id="BSUB:BSU34730-MONOMER"/>
<dbReference type="Proteomes" id="UP000001570">
    <property type="component" value="Chromosome"/>
</dbReference>
<dbReference type="GO" id="GO:0016407">
    <property type="term" value="F:acetyltransferase activity"/>
    <property type="evidence" value="ECO:0007669"/>
    <property type="project" value="InterPro"/>
</dbReference>
<dbReference type="Gene3D" id="3.30.2140.20">
    <property type="match status" value="1"/>
</dbReference>
<dbReference type="InterPro" id="IPR001447">
    <property type="entry name" value="Arylamine_N-AcTrfase"/>
</dbReference>
<dbReference type="InterPro" id="IPR053710">
    <property type="entry name" value="Arylamine_NAT_domain_sf"/>
</dbReference>
<dbReference type="InterPro" id="IPR038765">
    <property type="entry name" value="Papain-like_cys_pep_sf"/>
</dbReference>
<dbReference type="PANTHER" id="PTHR11786:SF0">
    <property type="entry name" value="ARYLAMINE N-ACETYLTRANSFERASE 4-RELATED"/>
    <property type="match status" value="1"/>
</dbReference>
<dbReference type="PANTHER" id="PTHR11786">
    <property type="entry name" value="N-HYDROXYARYLAMINE O-ACETYLTRANSFERASE"/>
    <property type="match status" value="1"/>
</dbReference>
<dbReference type="Pfam" id="PF00797">
    <property type="entry name" value="Acetyltransf_2"/>
    <property type="match status" value="1"/>
</dbReference>
<dbReference type="PRINTS" id="PR01543">
    <property type="entry name" value="ANATRNSFRASE"/>
</dbReference>
<dbReference type="SUPFAM" id="SSF54001">
    <property type="entry name" value="Cysteine proteinases"/>
    <property type="match status" value="1"/>
</dbReference>
<keyword id="KW-0012">Acyltransferase</keyword>
<keyword id="KW-1185">Reference proteome</keyword>
<keyword id="KW-0808">Transferase</keyword>
<name>YVCN_BACSU</name>
<sequence>MIKMSDFLKDCFQKIGWEKDHVSFGDLPLFLKAMAYRFPFENRAVLAKENYKITKEELWRRLLKDQHGGLCYDLNGFLYFVLREAGFHVKLIRGTVYAGDQEGWALEGTHAAVWLSAENGDYLVDIGFGINLALQPIPLSGETVQSPVGSFRIKKEETEKGSYVLLMDKGEGWQIGYAFTLEESDLGDLDNMKDIIHSHEKSPFNKSLLASKLTPSGRMVMSERHFTIYENGGNIQKSDIGPSGFEEKLNTHFL</sequence>
<gene>
    <name type="primary">yvcN</name>
    <name type="ordered locus">BSU34730</name>
</gene>
<reference key="1">
    <citation type="submission" date="1997-04" db="EMBL/GenBank/DDBJ databases">
        <authorList>
            <person name="Denizot F."/>
        </authorList>
    </citation>
    <scope>NUCLEOTIDE SEQUENCE [GENOMIC DNA]</scope>
    <source>
        <strain>168</strain>
    </source>
</reference>
<reference key="2">
    <citation type="journal article" date="1997" name="Nature">
        <title>The complete genome sequence of the Gram-positive bacterium Bacillus subtilis.</title>
        <authorList>
            <person name="Kunst F."/>
            <person name="Ogasawara N."/>
            <person name="Moszer I."/>
            <person name="Albertini A.M."/>
            <person name="Alloni G."/>
            <person name="Azevedo V."/>
            <person name="Bertero M.G."/>
            <person name="Bessieres P."/>
            <person name="Bolotin A."/>
            <person name="Borchert S."/>
            <person name="Borriss R."/>
            <person name="Boursier L."/>
            <person name="Brans A."/>
            <person name="Braun M."/>
            <person name="Brignell S.C."/>
            <person name="Bron S."/>
            <person name="Brouillet S."/>
            <person name="Bruschi C.V."/>
            <person name="Caldwell B."/>
            <person name="Capuano V."/>
            <person name="Carter N.M."/>
            <person name="Choi S.-K."/>
            <person name="Codani J.-J."/>
            <person name="Connerton I.F."/>
            <person name="Cummings N.J."/>
            <person name="Daniel R.A."/>
            <person name="Denizot F."/>
            <person name="Devine K.M."/>
            <person name="Duesterhoeft A."/>
            <person name="Ehrlich S.D."/>
            <person name="Emmerson P.T."/>
            <person name="Entian K.-D."/>
            <person name="Errington J."/>
            <person name="Fabret C."/>
            <person name="Ferrari E."/>
            <person name="Foulger D."/>
            <person name="Fritz C."/>
            <person name="Fujita M."/>
            <person name="Fujita Y."/>
            <person name="Fuma S."/>
            <person name="Galizzi A."/>
            <person name="Galleron N."/>
            <person name="Ghim S.-Y."/>
            <person name="Glaser P."/>
            <person name="Goffeau A."/>
            <person name="Golightly E.J."/>
            <person name="Grandi G."/>
            <person name="Guiseppi G."/>
            <person name="Guy B.J."/>
            <person name="Haga K."/>
            <person name="Haiech J."/>
            <person name="Harwood C.R."/>
            <person name="Henaut A."/>
            <person name="Hilbert H."/>
            <person name="Holsappel S."/>
            <person name="Hosono S."/>
            <person name="Hullo M.-F."/>
            <person name="Itaya M."/>
            <person name="Jones L.-M."/>
            <person name="Joris B."/>
            <person name="Karamata D."/>
            <person name="Kasahara Y."/>
            <person name="Klaerr-Blanchard M."/>
            <person name="Klein C."/>
            <person name="Kobayashi Y."/>
            <person name="Koetter P."/>
            <person name="Koningstein G."/>
            <person name="Krogh S."/>
            <person name="Kumano M."/>
            <person name="Kurita K."/>
            <person name="Lapidus A."/>
            <person name="Lardinois S."/>
            <person name="Lauber J."/>
            <person name="Lazarevic V."/>
            <person name="Lee S.-M."/>
            <person name="Levine A."/>
            <person name="Liu H."/>
            <person name="Masuda S."/>
            <person name="Mauel C."/>
            <person name="Medigue C."/>
            <person name="Medina N."/>
            <person name="Mellado R.P."/>
            <person name="Mizuno M."/>
            <person name="Moestl D."/>
            <person name="Nakai S."/>
            <person name="Noback M."/>
            <person name="Noone D."/>
            <person name="O'Reilly M."/>
            <person name="Ogawa K."/>
            <person name="Ogiwara A."/>
            <person name="Oudega B."/>
            <person name="Park S.-H."/>
            <person name="Parro V."/>
            <person name="Pohl T.M."/>
            <person name="Portetelle D."/>
            <person name="Porwollik S."/>
            <person name="Prescott A.M."/>
            <person name="Presecan E."/>
            <person name="Pujic P."/>
            <person name="Purnelle B."/>
            <person name="Rapoport G."/>
            <person name="Rey M."/>
            <person name="Reynolds S."/>
            <person name="Rieger M."/>
            <person name="Rivolta C."/>
            <person name="Rocha E."/>
            <person name="Roche B."/>
            <person name="Rose M."/>
            <person name="Sadaie Y."/>
            <person name="Sato T."/>
            <person name="Scanlan E."/>
            <person name="Schleich S."/>
            <person name="Schroeter R."/>
            <person name="Scoffone F."/>
            <person name="Sekiguchi J."/>
            <person name="Sekowska A."/>
            <person name="Seror S.J."/>
            <person name="Serror P."/>
            <person name="Shin B.-S."/>
            <person name="Soldo B."/>
            <person name="Sorokin A."/>
            <person name="Tacconi E."/>
            <person name="Takagi T."/>
            <person name="Takahashi H."/>
            <person name="Takemaru K."/>
            <person name="Takeuchi M."/>
            <person name="Tamakoshi A."/>
            <person name="Tanaka T."/>
            <person name="Terpstra P."/>
            <person name="Tognoni A."/>
            <person name="Tosato V."/>
            <person name="Uchiyama S."/>
            <person name="Vandenbol M."/>
            <person name="Vannier F."/>
            <person name="Vassarotti A."/>
            <person name="Viari A."/>
            <person name="Wambutt R."/>
            <person name="Wedler E."/>
            <person name="Wedler H."/>
            <person name="Weitzenegger T."/>
            <person name="Winters P."/>
            <person name="Wipat A."/>
            <person name="Yamamoto H."/>
            <person name="Yamane K."/>
            <person name="Yasumoto K."/>
            <person name="Yata K."/>
            <person name="Yoshida K."/>
            <person name="Yoshikawa H.-F."/>
            <person name="Zumstein E."/>
            <person name="Yoshikawa H."/>
            <person name="Danchin A."/>
        </authorList>
    </citation>
    <scope>NUCLEOTIDE SEQUENCE [LARGE SCALE GENOMIC DNA]</scope>
    <source>
        <strain>168</strain>
    </source>
</reference>
<comment type="similarity">
    <text evidence="2">Belongs to the arylamine N-acetyltransferase family.</text>
</comment>
<proteinExistence type="inferred from homology"/>